<organism>
    <name type="scientific">Petrotoga mobilis (strain DSM 10674 / SJ95)</name>
    <dbReference type="NCBI Taxonomy" id="403833"/>
    <lineage>
        <taxon>Bacteria</taxon>
        <taxon>Thermotogati</taxon>
        <taxon>Thermotogota</taxon>
        <taxon>Thermotogae</taxon>
        <taxon>Petrotogales</taxon>
        <taxon>Petrotogaceae</taxon>
        <taxon>Petrotoga</taxon>
    </lineage>
</organism>
<name>RLMN_PETMO</name>
<reference key="1">
    <citation type="submission" date="2007-11" db="EMBL/GenBank/DDBJ databases">
        <title>Complete sequence of Petroga mobilis SJ95.</title>
        <authorList>
            <consortium name="US DOE Joint Genome Institute"/>
            <person name="Copeland A."/>
            <person name="Lucas S."/>
            <person name="Lapidus A."/>
            <person name="Barry K."/>
            <person name="Glavina del Rio T."/>
            <person name="Dalin E."/>
            <person name="Tice H."/>
            <person name="Pitluck S."/>
            <person name="Meincke L."/>
            <person name="Brettin T."/>
            <person name="Bruce D."/>
            <person name="Detter J.C."/>
            <person name="Han C."/>
            <person name="Kuske C.R."/>
            <person name="Schmutz J."/>
            <person name="Larimer F."/>
            <person name="Land M."/>
            <person name="Hauser L."/>
            <person name="Kyrpides N."/>
            <person name="Mikhailova N."/>
            <person name="Noll K."/>
            <person name="Richardson P."/>
        </authorList>
    </citation>
    <scope>NUCLEOTIDE SEQUENCE [LARGE SCALE GENOMIC DNA]</scope>
    <source>
        <strain>DSM 10674 / SJ95</strain>
    </source>
</reference>
<proteinExistence type="inferred from homology"/>
<feature type="chain" id="PRO_0000350305" description="Probable dual-specificity RNA methyltransferase RlmN">
    <location>
        <begin position="1"/>
        <end position="347"/>
    </location>
</feature>
<feature type="domain" description="Radical SAM core" evidence="2">
    <location>
        <begin position="100"/>
        <end position="319"/>
    </location>
</feature>
<feature type="active site" description="Proton acceptor" evidence="1">
    <location>
        <position position="94"/>
    </location>
</feature>
<feature type="active site" description="S-methylcysteine intermediate" evidence="1">
    <location>
        <position position="334"/>
    </location>
</feature>
<feature type="binding site" evidence="1">
    <location>
        <position position="114"/>
    </location>
    <ligand>
        <name>[4Fe-4S] cluster</name>
        <dbReference type="ChEBI" id="CHEBI:49883"/>
        <note>4Fe-4S-S-AdoMet</note>
    </ligand>
</feature>
<feature type="binding site" evidence="1">
    <location>
        <position position="118"/>
    </location>
    <ligand>
        <name>[4Fe-4S] cluster</name>
        <dbReference type="ChEBI" id="CHEBI:49883"/>
        <note>4Fe-4S-S-AdoMet</note>
    </ligand>
</feature>
<feature type="binding site" evidence="1">
    <location>
        <position position="121"/>
    </location>
    <ligand>
        <name>[4Fe-4S] cluster</name>
        <dbReference type="ChEBI" id="CHEBI:49883"/>
        <note>4Fe-4S-S-AdoMet</note>
    </ligand>
</feature>
<feature type="binding site" evidence="1">
    <location>
        <begin position="161"/>
        <end position="162"/>
    </location>
    <ligand>
        <name>S-adenosyl-L-methionine</name>
        <dbReference type="ChEBI" id="CHEBI:59789"/>
    </ligand>
</feature>
<feature type="binding site" evidence="1">
    <location>
        <position position="193"/>
    </location>
    <ligand>
        <name>S-adenosyl-L-methionine</name>
        <dbReference type="ChEBI" id="CHEBI:59789"/>
    </ligand>
</feature>
<feature type="binding site" evidence="1">
    <location>
        <begin position="216"/>
        <end position="218"/>
    </location>
    <ligand>
        <name>S-adenosyl-L-methionine</name>
        <dbReference type="ChEBI" id="CHEBI:59789"/>
    </ligand>
</feature>
<feature type="binding site" evidence="1">
    <location>
        <position position="292"/>
    </location>
    <ligand>
        <name>S-adenosyl-L-methionine</name>
        <dbReference type="ChEBI" id="CHEBI:59789"/>
    </ligand>
</feature>
<feature type="disulfide bond" description="(transient)" evidence="1">
    <location>
        <begin position="107"/>
        <end position="334"/>
    </location>
</feature>
<sequence>MQTKNILDFEYSDLQSYLLNELGLEKFRTDQICDWIYKKRVFDFESMTNLSKDDRQKLSDNFKISIPHIVKKEVSKIDGTTKYLLELEDKNTVEAVIIYYPSRTIACISTQVGCPLKCSFCSTGQSGYVRNLSTGEIIGQLLAMEKDKEMDVKNVVYMGMGEPLLNFNNVVQTIEILNHPKMKKLGARHITISTAGIPQKIEEVGDLNKEFRLSVSLHAPTNLQRDQIMPINHKYPVEQVIQSCRIYQKKTKKRVTFEYILIKGFNDSKEDALKLVELFGDLKVMVNLIPVNENPAGFEKPSKRFIQAFLDTLVKNGIDAVVRAEKGSDISAACGQLRTRELKEANR</sequence>
<accession>A9BIC0</accession>
<protein>
    <recommendedName>
        <fullName evidence="1">Probable dual-specificity RNA methyltransferase RlmN</fullName>
        <ecNumber evidence="1">2.1.1.192</ecNumber>
    </recommendedName>
    <alternativeName>
        <fullName evidence="1">23S rRNA (adenine(2503)-C(2))-methyltransferase</fullName>
    </alternativeName>
    <alternativeName>
        <fullName evidence="1">23S rRNA m2A2503 methyltransferase</fullName>
    </alternativeName>
    <alternativeName>
        <fullName evidence="1">Ribosomal RNA large subunit methyltransferase N</fullName>
    </alternativeName>
    <alternativeName>
        <fullName evidence="1">tRNA (adenine(37)-C(2))-methyltransferase</fullName>
    </alternativeName>
    <alternativeName>
        <fullName evidence="1">tRNA m2A37 methyltransferase</fullName>
    </alternativeName>
</protein>
<keyword id="KW-0004">4Fe-4S</keyword>
<keyword id="KW-0963">Cytoplasm</keyword>
<keyword id="KW-1015">Disulfide bond</keyword>
<keyword id="KW-0408">Iron</keyword>
<keyword id="KW-0411">Iron-sulfur</keyword>
<keyword id="KW-0479">Metal-binding</keyword>
<keyword id="KW-0489">Methyltransferase</keyword>
<keyword id="KW-0698">rRNA processing</keyword>
<keyword id="KW-0949">S-adenosyl-L-methionine</keyword>
<keyword id="KW-0808">Transferase</keyword>
<keyword id="KW-0819">tRNA processing</keyword>
<comment type="function">
    <text evidence="1">Specifically methylates position 2 of adenine 2503 in 23S rRNA and position 2 of adenine 37 in tRNAs.</text>
</comment>
<comment type="catalytic activity">
    <reaction evidence="1">
        <text>adenosine(2503) in 23S rRNA + 2 reduced [2Fe-2S]-[ferredoxin] + 2 S-adenosyl-L-methionine = 2-methyladenosine(2503) in 23S rRNA + 5'-deoxyadenosine + L-methionine + 2 oxidized [2Fe-2S]-[ferredoxin] + S-adenosyl-L-homocysteine</text>
        <dbReference type="Rhea" id="RHEA:42916"/>
        <dbReference type="Rhea" id="RHEA-COMP:10000"/>
        <dbReference type="Rhea" id="RHEA-COMP:10001"/>
        <dbReference type="Rhea" id="RHEA-COMP:10152"/>
        <dbReference type="Rhea" id="RHEA-COMP:10282"/>
        <dbReference type="ChEBI" id="CHEBI:17319"/>
        <dbReference type="ChEBI" id="CHEBI:33737"/>
        <dbReference type="ChEBI" id="CHEBI:33738"/>
        <dbReference type="ChEBI" id="CHEBI:57844"/>
        <dbReference type="ChEBI" id="CHEBI:57856"/>
        <dbReference type="ChEBI" id="CHEBI:59789"/>
        <dbReference type="ChEBI" id="CHEBI:74411"/>
        <dbReference type="ChEBI" id="CHEBI:74497"/>
        <dbReference type="EC" id="2.1.1.192"/>
    </reaction>
</comment>
<comment type="catalytic activity">
    <reaction evidence="1">
        <text>adenosine(37) in tRNA + 2 reduced [2Fe-2S]-[ferredoxin] + 2 S-adenosyl-L-methionine = 2-methyladenosine(37) in tRNA + 5'-deoxyadenosine + L-methionine + 2 oxidized [2Fe-2S]-[ferredoxin] + S-adenosyl-L-homocysteine</text>
        <dbReference type="Rhea" id="RHEA:43332"/>
        <dbReference type="Rhea" id="RHEA-COMP:10000"/>
        <dbReference type="Rhea" id="RHEA-COMP:10001"/>
        <dbReference type="Rhea" id="RHEA-COMP:10162"/>
        <dbReference type="Rhea" id="RHEA-COMP:10485"/>
        <dbReference type="ChEBI" id="CHEBI:17319"/>
        <dbReference type="ChEBI" id="CHEBI:33737"/>
        <dbReference type="ChEBI" id="CHEBI:33738"/>
        <dbReference type="ChEBI" id="CHEBI:57844"/>
        <dbReference type="ChEBI" id="CHEBI:57856"/>
        <dbReference type="ChEBI" id="CHEBI:59789"/>
        <dbReference type="ChEBI" id="CHEBI:74411"/>
        <dbReference type="ChEBI" id="CHEBI:74497"/>
        <dbReference type="EC" id="2.1.1.192"/>
    </reaction>
</comment>
<comment type="cofactor">
    <cofactor evidence="1">
        <name>[4Fe-4S] cluster</name>
        <dbReference type="ChEBI" id="CHEBI:49883"/>
    </cofactor>
    <text evidence="1">Binds 1 [4Fe-4S] cluster. The cluster is coordinated with 3 cysteines and an exchangeable S-adenosyl-L-methionine.</text>
</comment>
<comment type="subcellular location">
    <subcellularLocation>
        <location evidence="1">Cytoplasm</location>
    </subcellularLocation>
</comment>
<comment type="miscellaneous">
    <text evidence="1">Reaction proceeds by a ping-pong mechanism involving intermediate methylation of a conserved cysteine residue.</text>
</comment>
<comment type="similarity">
    <text evidence="1">Belongs to the radical SAM superfamily. RlmN family.</text>
</comment>
<gene>
    <name evidence="1" type="primary">rlmN</name>
    <name type="ordered locus">Pmob_1905</name>
</gene>
<dbReference type="EC" id="2.1.1.192" evidence="1"/>
<dbReference type="EMBL" id="CP000879">
    <property type="protein sequence ID" value="ABX32592.1"/>
    <property type="molecule type" value="Genomic_DNA"/>
</dbReference>
<dbReference type="RefSeq" id="WP_012209689.1">
    <property type="nucleotide sequence ID" value="NC_010003.1"/>
</dbReference>
<dbReference type="SMR" id="A9BIC0"/>
<dbReference type="STRING" id="403833.Pmob_1905"/>
<dbReference type="KEGG" id="pmo:Pmob_1905"/>
<dbReference type="eggNOG" id="COG0820">
    <property type="taxonomic scope" value="Bacteria"/>
</dbReference>
<dbReference type="HOGENOM" id="CLU_029101_2_0_0"/>
<dbReference type="OrthoDB" id="9793973at2"/>
<dbReference type="Proteomes" id="UP000000789">
    <property type="component" value="Chromosome"/>
</dbReference>
<dbReference type="GO" id="GO:0005737">
    <property type="term" value="C:cytoplasm"/>
    <property type="evidence" value="ECO:0007669"/>
    <property type="project" value="UniProtKB-SubCell"/>
</dbReference>
<dbReference type="GO" id="GO:0051539">
    <property type="term" value="F:4 iron, 4 sulfur cluster binding"/>
    <property type="evidence" value="ECO:0007669"/>
    <property type="project" value="UniProtKB-UniRule"/>
</dbReference>
<dbReference type="GO" id="GO:0046872">
    <property type="term" value="F:metal ion binding"/>
    <property type="evidence" value="ECO:0007669"/>
    <property type="project" value="UniProtKB-KW"/>
</dbReference>
<dbReference type="GO" id="GO:0070040">
    <property type="term" value="F:rRNA (adenine(2503)-C2-)-methyltransferase activity"/>
    <property type="evidence" value="ECO:0007669"/>
    <property type="project" value="UniProtKB-UniRule"/>
</dbReference>
<dbReference type="GO" id="GO:0019843">
    <property type="term" value="F:rRNA binding"/>
    <property type="evidence" value="ECO:0007669"/>
    <property type="project" value="UniProtKB-UniRule"/>
</dbReference>
<dbReference type="GO" id="GO:0002935">
    <property type="term" value="F:tRNA (adenine(37)-C2)-methyltransferase activity"/>
    <property type="evidence" value="ECO:0007669"/>
    <property type="project" value="UniProtKB-UniRule"/>
</dbReference>
<dbReference type="GO" id="GO:0000049">
    <property type="term" value="F:tRNA binding"/>
    <property type="evidence" value="ECO:0007669"/>
    <property type="project" value="UniProtKB-UniRule"/>
</dbReference>
<dbReference type="GO" id="GO:0070475">
    <property type="term" value="P:rRNA base methylation"/>
    <property type="evidence" value="ECO:0007669"/>
    <property type="project" value="UniProtKB-UniRule"/>
</dbReference>
<dbReference type="GO" id="GO:0030488">
    <property type="term" value="P:tRNA methylation"/>
    <property type="evidence" value="ECO:0007669"/>
    <property type="project" value="UniProtKB-UniRule"/>
</dbReference>
<dbReference type="CDD" id="cd01335">
    <property type="entry name" value="Radical_SAM"/>
    <property type="match status" value="1"/>
</dbReference>
<dbReference type="FunFam" id="3.20.20.70:FF:000014">
    <property type="entry name" value="Probable dual-specificity RNA methyltransferase RlmN"/>
    <property type="match status" value="1"/>
</dbReference>
<dbReference type="Gene3D" id="1.10.150.530">
    <property type="match status" value="1"/>
</dbReference>
<dbReference type="Gene3D" id="3.20.20.70">
    <property type="entry name" value="Aldolase class I"/>
    <property type="match status" value="1"/>
</dbReference>
<dbReference type="HAMAP" id="MF_01849">
    <property type="entry name" value="RNA_methyltr_RlmN"/>
    <property type="match status" value="1"/>
</dbReference>
<dbReference type="InterPro" id="IPR013785">
    <property type="entry name" value="Aldolase_TIM"/>
</dbReference>
<dbReference type="InterPro" id="IPR006638">
    <property type="entry name" value="Elp3/MiaA/NifB-like_rSAM"/>
</dbReference>
<dbReference type="InterPro" id="IPR040072">
    <property type="entry name" value="Methyltransferase_A"/>
</dbReference>
<dbReference type="InterPro" id="IPR048641">
    <property type="entry name" value="RlmN_N"/>
</dbReference>
<dbReference type="InterPro" id="IPR027492">
    <property type="entry name" value="RNA_MTrfase_RlmN"/>
</dbReference>
<dbReference type="InterPro" id="IPR004383">
    <property type="entry name" value="rRNA_lsu_MTrfase_RlmN/Cfr"/>
</dbReference>
<dbReference type="InterPro" id="IPR007197">
    <property type="entry name" value="rSAM"/>
</dbReference>
<dbReference type="NCBIfam" id="TIGR00048">
    <property type="entry name" value="rRNA_mod_RlmN"/>
    <property type="match status" value="1"/>
</dbReference>
<dbReference type="PANTHER" id="PTHR30544">
    <property type="entry name" value="23S RRNA METHYLTRANSFERASE"/>
    <property type="match status" value="1"/>
</dbReference>
<dbReference type="PANTHER" id="PTHR30544:SF5">
    <property type="entry name" value="RADICAL SAM CORE DOMAIN-CONTAINING PROTEIN"/>
    <property type="match status" value="1"/>
</dbReference>
<dbReference type="Pfam" id="PF04055">
    <property type="entry name" value="Radical_SAM"/>
    <property type="match status" value="1"/>
</dbReference>
<dbReference type="Pfam" id="PF21016">
    <property type="entry name" value="RlmN_N"/>
    <property type="match status" value="1"/>
</dbReference>
<dbReference type="PIRSF" id="PIRSF006004">
    <property type="entry name" value="CHP00048"/>
    <property type="match status" value="1"/>
</dbReference>
<dbReference type="SFLD" id="SFLDF00275">
    <property type="entry name" value="adenosine_C2_methyltransferase"/>
    <property type="match status" value="1"/>
</dbReference>
<dbReference type="SFLD" id="SFLDG01062">
    <property type="entry name" value="methyltransferase_(Class_A)"/>
    <property type="match status" value="1"/>
</dbReference>
<dbReference type="SMART" id="SM00729">
    <property type="entry name" value="Elp3"/>
    <property type="match status" value="1"/>
</dbReference>
<dbReference type="SUPFAM" id="SSF102114">
    <property type="entry name" value="Radical SAM enzymes"/>
    <property type="match status" value="1"/>
</dbReference>
<dbReference type="PROSITE" id="PS51918">
    <property type="entry name" value="RADICAL_SAM"/>
    <property type="match status" value="1"/>
</dbReference>
<evidence type="ECO:0000255" key="1">
    <source>
        <dbReference type="HAMAP-Rule" id="MF_01849"/>
    </source>
</evidence>
<evidence type="ECO:0000255" key="2">
    <source>
        <dbReference type="PROSITE-ProRule" id="PRU01266"/>
    </source>
</evidence>